<sequence>MASAIFVLNLKGKVIISRDYRADIPMSVVEKFLPLKSEVEEEQGFSTPCLTHEGINYIYIHHNDVYLLALSKMNSDAMEMLVFLRKMADVFIDYFKELQEESIRDNFVLVYELLDEIMDFGFPQTTETKILQEYITQTSNTVKKHAPPPIAMTNAISWRSEGIHYRKNEVFLDVIESVNLIAAADGTVIQSEILGKVRLKCYLSGMPELRLGLNDKVLFEAAGRTIKGNTVEMEDVKFHQCVRLARFENDRTISFIPPDGEFDLMSYRMSSNVRPLIWVECESIVHSGSRIEFMVKAKAQFKKRCIANNVQIIIPVPEDADSPRFQTSNGHVQYAPEQAAMVWNIKKFAGGKEFFMRAEMGLPSVKNEDIQVQKKRPVQLKFAIPYFTTSGIQVRYLKITEPKLNYHAMPWVRYVTQNGTEYSIRQ</sequence>
<protein>
    <recommendedName>
        <fullName>AP-1 complex subunit mu-1</fullName>
    </recommendedName>
    <alternativeName>
        <fullName>Clathrin assembly protein complex 1 mu-1 medium chain</fullName>
    </alternativeName>
    <alternativeName>
        <fullName>Mu-adaptin</fullName>
    </alternativeName>
</protein>
<feature type="chain" id="PRO_0000193777" description="AP-1 complex subunit mu-1">
    <location>
        <begin position="1"/>
        <end position="426"/>
    </location>
</feature>
<feature type="domain" description="MHD" evidence="2">
    <location>
        <begin position="167"/>
        <end position="425"/>
    </location>
</feature>
<comment type="function">
    <text evidence="1">Component of the adaptor complexes which link clathrin to receptors in coated vesicles. Clathrin-associated protein complexes are believed to interact with the cytoplasmic tails of membrane proteins, leading to their selection and concentration (By similarity).</text>
</comment>
<comment type="subunit">
    <text evidence="1 3">Adaptor protein complex 1 (AP-1) is a heterotetramer composed of two large adaptins (gamma-type subunit apl4 and beta-type subunit apl2), a medium adaptin (mu-type subunit apm1) and a small adaptin (sigma-type subunit aps1). AP-1 interacts with clathrin (By similarity). Interacts with sad1.</text>
</comment>
<comment type="subcellular location">
    <subcellularLocation>
        <location evidence="1">Cytoplasmic vesicle</location>
        <location evidence="1">Clathrin-coated vesicle membrane</location>
        <topology evidence="1">Peripheral membrane protein</topology>
        <orientation evidence="1">Cytoplasmic side</orientation>
    </subcellularLocation>
    <subcellularLocation>
        <location evidence="1">Membrane</location>
        <location evidence="1">Clathrin-coated pit</location>
        <topology evidence="1">Peripheral membrane protein</topology>
        <orientation evidence="1">Cytoplasmic side</orientation>
    </subcellularLocation>
</comment>
<comment type="similarity">
    <text evidence="4">Belongs to the adaptor complexes medium subunit family.</text>
</comment>
<organism>
    <name type="scientific">Schizosaccharomyces pombe (strain 972 / ATCC 24843)</name>
    <name type="common">Fission yeast</name>
    <dbReference type="NCBI Taxonomy" id="284812"/>
    <lineage>
        <taxon>Eukaryota</taxon>
        <taxon>Fungi</taxon>
        <taxon>Dikarya</taxon>
        <taxon>Ascomycota</taxon>
        <taxon>Taphrinomycotina</taxon>
        <taxon>Schizosaccharomycetes</taxon>
        <taxon>Schizosaccharomycetales</taxon>
        <taxon>Schizosaccharomycetaceae</taxon>
        <taxon>Schizosaccharomyces</taxon>
    </lineage>
</organism>
<accession>Q9HFE5</accession>
<gene>
    <name type="primary">apm1</name>
    <name type="ORF">SPBP16F5.07</name>
</gene>
<keyword id="KW-0168">Coated pit</keyword>
<keyword id="KW-0968">Cytoplasmic vesicle</keyword>
<keyword id="KW-0472">Membrane</keyword>
<keyword id="KW-0653">Protein transport</keyword>
<keyword id="KW-1185">Reference proteome</keyword>
<keyword id="KW-0813">Transport</keyword>
<name>AP1M1_SCHPO</name>
<dbReference type="EMBL" id="CU329671">
    <property type="protein sequence ID" value="CAC08546.1"/>
    <property type="molecule type" value="Genomic_DNA"/>
</dbReference>
<dbReference type="RefSeq" id="NP_595781.1">
    <property type="nucleotide sequence ID" value="NM_001021681.2"/>
</dbReference>
<dbReference type="SMR" id="Q9HFE5"/>
<dbReference type="BioGRID" id="277818">
    <property type="interactions" value="38"/>
</dbReference>
<dbReference type="FunCoup" id="Q9HFE5">
    <property type="interactions" value="260"/>
</dbReference>
<dbReference type="IntAct" id="Q9HFE5">
    <property type="interactions" value="1"/>
</dbReference>
<dbReference type="STRING" id="284812.Q9HFE5"/>
<dbReference type="iPTMnet" id="Q9HFE5"/>
<dbReference type="PaxDb" id="4896-SPBP16F5.07.1"/>
<dbReference type="EnsemblFungi" id="SPBP16F5.07.1">
    <property type="protein sequence ID" value="SPBP16F5.07.1:pep"/>
    <property type="gene ID" value="SPBP16F5.07"/>
</dbReference>
<dbReference type="GeneID" id="2541306"/>
<dbReference type="KEGG" id="spo:2541306"/>
<dbReference type="PomBase" id="SPBP16F5.07">
    <property type="gene designation" value="apm1"/>
</dbReference>
<dbReference type="VEuPathDB" id="FungiDB:SPBP16F5.07"/>
<dbReference type="eggNOG" id="KOG0937">
    <property type="taxonomic scope" value="Eukaryota"/>
</dbReference>
<dbReference type="HOGENOM" id="CLU_026996_0_0_1"/>
<dbReference type="InParanoid" id="Q9HFE5"/>
<dbReference type="OMA" id="KPLIWCD"/>
<dbReference type="PhylomeDB" id="Q9HFE5"/>
<dbReference type="Reactome" id="R-SPO-432720">
    <property type="pathway name" value="Lysosome Vesicle Biogenesis"/>
</dbReference>
<dbReference type="Reactome" id="R-SPO-6798695">
    <property type="pathway name" value="Neutrophil degranulation"/>
</dbReference>
<dbReference type="Reactome" id="R-SPO-8856825">
    <property type="pathway name" value="Cargo recognition for clathrin-mediated endocytosis"/>
</dbReference>
<dbReference type="PRO" id="PR:Q9HFE5"/>
<dbReference type="Proteomes" id="UP000002485">
    <property type="component" value="Chromosome II"/>
</dbReference>
<dbReference type="GO" id="GO:0030121">
    <property type="term" value="C:AP-1 adaptor complex"/>
    <property type="evidence" value="ECO:0000314"/>
    <property type="project" value="PomBase"/>
</dbReference>
<dbReference type="GO" id="GO:0032153">
    <property type="term" value="C:cell division site"/>
    <property type="evidence" value="ECO:0007005"/>
    <property type="project" value="PomBase"/>
</dbReference>
<dbReference type="GO" id="GO:0051286">
    <property type="term" value="C:cell tip"/>
    <property type="evidence" value="ECO:0007005"/>
    <property type="project" value="PomBase"/>
</dbReference>
<dbReference type="GO" id="GO:0005905">
    <property type="term" value="C:clathrin-coated pit"/>
    <property type="evidence" value="ECO:0007669"/>
    <property type="project" value="UniProtKB-SubCell"/>
</dbReference>
<dbReference type="GO" id="GO:0030136">
    <property type="term" value="C:clathrin-coated vesicle"/>
    <property type="evidence" value="ECO:0000318"/>
    <property type="project" value="GO_Central"/>
</dbReference>
<dbReference type="GO" id="GO:0005829">
    <property type="term" value="C:cytosol"/>
    <property type="evidence" value="ECO:0007005"/>
    <property type="project" value="PomBase"/>
</dbReference>
<dbReference type="GO" id="GO:0005768">
    <property type="term" value="C:endosome"/>
    <property type="evidence" value="ECO:0000314"/>
    <property type="project" value="PomBase"/>
</dbReference>
<dbReference type="GO" id="GO:0005794">
    <property type="term" value="C:Golgi apparatus"/>
    <property type="evidence" value="ECO:0000314"/>
    <property type="project" value="PomBase"/>
</dbReference>
<dbReference type="GO" id="GO:0044732">
    <property type="term" value="C:mitotic spindle pole body"/>
    <property type="evidence" value="ECO:0007005"/>
    <property type="project" value="PomBase"/>
</dbReference>
<dbReference type="GO" id="GO:0005634">
    <property type="term" value="C:nucleus"/>
    <property type="evidence" value="ECO:0007005"/>
    <property type="project" value="PomBase"/>
</dbReference>
<dbReference type="GO" id="GO:0035615">
    <property type="term" value="F:clathrin adaptor activity"/>
    <property type="evidence" value="ECO:0000318"/>
    <property type="project" value="GO_Central"/>
</dbReference>
<dbReference type="GO" id="GO:0099638">
    <property type="term" value="P:endosome to plasma membrane protein transport"/>
    <property type="evidence" value="ECO:0000314"/>
    <property type="project" value="PomBase"/>
</dbReference>
<dbReference type="GO" id="GO:0006895">
    <property type="term" value="P:Golgi to endosome transport"/>
    <property type="evidence" value="ECO:0000315"/>
    <property type="project" value="PomBase"/>
</dbReference>
<dbReference type="GO" id="GO:0043001">
    <property type="term" value="P:Golgi to plasma membrane protein transport"/>
    <property type="evidence" value="ECO:0000315"/>
    <property type="project" value="PomBase"/>
</dbReference>
<dbReference type="GO" id="GO:0042147">
    <property type="term" value="P:retrograde transport, endosome to Golgi"/>
    <property type="evidence" value="ECO:0000314"/>
    <property type="project" value="PomBase"/>
</dbReference>
<dbReference type="GO" id="GO:0016192">
    <property type="term" value="P:vesicle-mediated transport"/>
    <property type="evidence" value="ECO:0000315"/>
    <property type="project" value="PomBase"/>
</dbReference>
<dbReference type="CDD" id="cd09250">
    <property type="entry name" value="AP-1_Mu1_Cterm"/>
    <property type="match status" value="1"/>
</dbReference>
<dbReference type="CDD" id="cd14835">
    <property type="entry name" value="AP1_Mu_N"/>
    <property type="match status" value="1"/>
</dbReference>
<dbReference type="FunFam" id="3.30.450.60:FF:000006">
    <property type="entry name" value="AP-1 complex subunit mu-1 isoform 1"/>
    <property type="match status" value="1"/>
</dbReference>
<dbReference type="Gene3D" id="3.30.450.60">
    <property type="match status" value="1"/>
</dbReference>
<dbReference type="Gene3D" id="2.60.40.1170">
    <property type="entry name" value="Mu homology domain, subdomain B"/>
    <property type="match status" value="2"/>
</dbReference>
<dbReference type="InterPro" id="IPR050431">
    <property type="entry name" value="Adaptor_comp_med_subunit"/>
</dbReference>
<dbReference type="InterPro" id="IPR036168">
    <property type="entry name" value="AP2_Mu_C_sf"/>
</dbReference>
<dbReference type="InterPro" id="IPR022775">
    <property type="entry name" value="AP_mu_sigma_su"/>
</dbReference>
<dbReference type="InterPro" id="IPR001392">
    <property type="entry name" value="Clathrin_mu"/>
</dbReference>
<dbReference type="InterPro" id="IPR018240">
    <property type="entry name" value="Clathrin_mu_CS"/>
</dbReference>
<dbReference type="InterPro" id="IPR011012">
    <property type="entry name" value="Longin-like_dom_sf"/>
</dbReference>
<dbReference type="InterPro" id="IPR028565">
    <property type="entry name" value="MHD"/>
</dbReference>
<dbReference type="PANTHER" id="PTHR10529">
    <property type="entry name" value="AP COMPLEX SUBUNIT MU"/>
    <property type="match status" value="1"/>
</dbReference>
<dbReference type="Pfam" id="PF00928">
    <property type="entry name" value="Adap_comp_sub"/>
    <property type="match status" value="1"/>
</dbReference>
<dbReference type="Pfam" id="PF01217">
    <property type="entry name" value="Clat_adaptor_s"/>
    <property type="match status" value="1"/>
</dbReference>
<dbReference type="PIRSF" id="PIRSF005992">
    <property type="entry name" value="Clathrin_mu"/>
    <property type="match status" value="1"/>
</dbReference>
<dbReference type="PRINTS" id="PR00314">
    <property type="entry name" value="CLATHRINADPT"/>
</dbReference>
<dbReference type="SUPFAM" id="SSF49447">
    <property type="entry name" value="Second domain of Mu2 adaptin subunit (ap50) of ap2 adaptor"/>
    <property type="match status" value="1"/>
</dbReference>
<dbReference type="SUPFAM" id="SSF64356">
    <property type="entry name" value="SNARE-like"/>
    <property type="match status" value="1"/>
</dbReference>
<dbReference type="PROSITE" id="PS00990">
    <property type="entry name" value="CLAT_ADAPTOR_M_1"/>
    <property type="match status" value="1"/>
</dbReference>
<dbReference type="PROSITE" id="PS00991">
    <property type="entry name" value="CLAT_ADAPTOR_M_2"/>
    <property type="match status" value="1"/>
</dbReference>
<dbReference type="PROSITE" id="PS51072">
    <property type="entry name" value="MHD"/>
    <property type="match status" value="1"/>
</dbReference>
<reference key="1">
    <citation type="journal article" date="2002" name="Nature">
        <title>The genome sequence of Schizosaccharomyces pombe.</title>
        <authorList>
            <person name="Wood V."/>
            <person name="Gwilliam R."/>
            <person name="Rajandream M.A."/>
            <person name="Lyne M.H."/>
            <person name="Lyne R."/>
            <person name="Stewart A."/>
            <person name="Sgouros J.G."/>
            <person name="Peat N."/>
            <person name="Hayles J."/>
            <person name="Baker S.G."/>
            <person name="Basham D."/>
            <person name="Bowman S."/>
            <person name="Brooks K."/>
            <person name="Brown D."/>
            <person name="Brown S."/>
            <person name="Chillingworth T."/>
            <person name="Churcher C.M."/>
            <person name="Collins M."/>
            <person name="Connor R."/>
            <person name="Cronin A."/>
            <person name="Davis P."/>
            <person name="Feltwell T."/>
            <person name="Fraser A."/>
            <person name="Gentles S."/>
            <person name="Goble A."/>
            <person name="Hamlin N."/>
            <person name="Harris D.E."/>
            <person name="Hidalgo J."/>
            <person name="Hodgson G."/>
            <person name="Holroyd S."/>
            <person name="Hornsby T."/>
            <person name="Howarth S."/>
            <person name="Huckle E.J."/>
            <person name="Hunt S."/>
            <person name="Jagels K."/>
            <person name="James K.D."/>
            <person name="Jones L."/>
            <person name="Jones M."/>
            <person name="Leather S."/>
            <person name="McDonald S."/>
            <person name="McLean J."/>
            <person name="Mooney P."/>
            <person name="Moule S."/>
            <person name="Mungall K.L."/>
            <person name="Murphy L.D."/>
            <person name="Niblett D."/>
            <person name="Odell C."/>
            <person name="Oliver K."/>
            <person name="O'Neil S."/>
            <person name="Pearson D."/>
            <person name="Quail M.A."/>
            <person name="Rabbinowitsch E."/>
            <person name="Rutherford K.M."/>
            <person name="Rutter S."/>
            <person name="Saunders D."/>
            <person name="Seeger K."/>
            <person name="Sharp S."/>
            <person name="Skelton J."/>
            <person name="Simmonds M.N."/>
            <person name="Squares R."/>
            <person name="Squares S."/>
            <person name="Stevens K."/>
            <person name="Taylor K."/>
            <person name="Taylor R.G."/>
            <person name="Tivey A."/>
            <person name="Walsh S.V."/>
            <person name="Warren T."/>
            <person name="Whitehead S."/>
            <person name="Woodward J.R."/>
            <person name="Volckaert G."/>
            <person name="Aert R."/>
            <person name="Robben J."/>
            <person name="Grymonprez B."/>
            <person name="Weltjens I."/>
            <person name="Vanstreels E."/>
            <person name="Rieger M."/>
            <person name="Schaefer M."/>
            <person name="Mueller-Auer S."/>
            <person name="Gabel C."/>
            <person name="Fuchs M."/>
            <person name="Duesterhoeft A."/>
            <person name="Fritzc C."/>
            <person name="Holzer E."/>
            <person name="Moestl D."/>
            <person name="Hilbert H."/>
            <person name="Borzym K."/>
            <person name="Langer I."/>
            <person name="Beck A."/>
            <person name="Lehrach H."/>
            <person name="Reinhardt R."/>
            <person name="Pohl T.M."/>
            <person name="Eger P."/>
            <person name="Zimmermann W."/>
            <person name="Wedler H."/>
            <person name="Wambutt R."/>
            <person name="Purnelle B."/>
            <person name="Goffeau A."/>
            <person name="Cadieu E."/>
            <person name="Dreano S."/>
            <person name="Gloux S."/>
            <person name="Lelaure V."/>
            <person name="Mottier S."/>
            <person name="Galibert F."/>
            <person name="Aves S.J."/>
            <person name="Xiang Z."/>
            <person name="Hunt C."/>
            <person name="Moore K."/>
            <person name="Hurst S.M."/>
            <person name="Lucas M."/>
            <person name="Rochet M."/>
            <person name="Gaillardin C."/>
            <person name="Tallada V.A."/>
            <person name="Garzon A."/>
            <person name="Thode G."/>
            <person name="Daga R.R."/>
            <person name="Cruzado L."/>
            <person name="Jimenez J."/>
            <person name="Sanchez M."/>
            <person name="del Rey F."/>
            <person name="Benito J."/>
            <person name="Dominguez A."/>
            <person name="Revuelta J.L."/>
            <person name="Moreno S."/>
            <person name="Armstrong J."/>
            <person name="Forsburg S.L."/>
            <person name="Cerutti L."/>
            <person name="Lowe T."/>
            <person name="McCombie W.R."/>
            <person name="Paulsen I."/>
            <person name="Potashkin J."/>
            <person name="Shpakovski G.V."/>
            <person name="Ussery D."/>
            <person name="Barrell B.G."/>
            <person name="Nurse P."/>
        </authorList>
    </citation>
    <scope>NUCLEOTIDE SEQUENCE [LARGE SCALE GENOMIC DNA]</scope>
    <source>
        <strain>972 / ATCC 24843</strain>
    </source>
</reference>
<reference key="2">
    <citation type="journal article" date="2004" name="Mol. Genet. Genomics">
        <title>Two-hybrid search for proteins that interact with Sad1 and Kms1, two membrane-bound components of the spindle pole body in fission yeast.</title>
        <authorList>
            <person name="Miki F."/>
            <person name="Kurabayashi A."/>
            <person name="Tange Y."/>
            <person name="Okazaki K."/>
            <person name="Shimanuki M."/>
            <person name="Niwa O."/>
        </authorList>
    </citation>
    <scope>INTERACTION WITH SAD1</scope>
</reference>
<evidence type="ECO:0000250" key="1"/>
<evidence type="ECO:0000255" key="2">
    <source>
        <dbReference type="PROSITE-ProRule" id="PRU00404"/>
    </source>
</evidence>
<evidence type="ECO:0000269" key="3">
    <source>
    </source>
</evidence>
<evidence type="ECO:0000305" key="4"/>
<proteinExistence type="evidence at protein level"/>